<dbReference type="EC" id="2.7.4.3" evidence="1"/>
<dbReference type="EMBL" id="CP000384">
    <property type="protein sequence ID" value="ABG07161.1"/>
    <property type="molecule type" value="Genomic_DNA"/>
</dbReference>
<dbReference type="SMR" id="Q1BD73"/>
<dbReference type="KEGG" id="mmc:Mmcs_1047"/>
<dbReference type="HOGENOM" id="CLU_032354_4_1_11"/>
<dbReference type="BioCyc" id="MSP164756:G1G6O-1072-MONOMER"/>
<dbReference type="UniPathway" id="UPA00588">
    <property type="reaction ID" value="UER00649"/>
</dbReference>
<dbReference type="GO" id="GO:0005737">
    <property type="term" value="C:cytoplasm"/>
    <property type="evidence" value="ECO:0007669"/>
    <property type="project" value="UniProtKB-SubCell"/>
</dbReference>
<dbReference type="GO" id="GO:0004017">
    <property type="term" value="F:adenylate kinase activity"/>
    <property type="evidence" value="ECO:0007669"/>
    <property type="project" value="UniProtKB-UniRule"/>
</dbReference>
<dbReference type="GO" id="GO:0005524">
    <property type="term" value="F:ATP binding"/>
    <property type="evidence" value="ECO:0007669"/>
    <property type="project" value="UniProtKB-UniRule"/>
</dbReference>
<dbReference type="GO" id="GO:0044209">
    <property type="term" value="P:AMP salvage"/>
    <property type="evidence" value="ECO:0007669"/>
    <property type="project" value="UniProtKB-UniRule"/>
</dbReference>
<dbReference type="CDD" id="cd01428">
    <property type="entry name" value="ADK"/>
    <property type="match status" value="1"/>
</dbReference>
<dbReference type="Gene3D" id="3.40.50.300">
    <property type="entry name" value="P-loop containing nucleotide triphosphate hydrolases"/>
    <property type="match status" value="1"/>
</dbReference>
<dbReference type="HAMAP" id="MF_00235">
    <property type="entry name" value="Adenylate_kinase_Adk"/>
    <property type="match status" value="1"/>
</dbReference>
<dbReference type="InterPro" id="IPR006259">
    <property type="entry name" value="Adenyl_kin_sub"/>
</dbReference>
<dbReference type="InterPro" id="IPR000850">
    <property type="entry name" value="Adenylat/UMP-CMP_kin"/>
</dbReference>
<dbReference type="InterPro" id="IPR033690">
    <property type="entry name" value="Adenylat_kinase_CS"/>
</dbReference>
<dbReference type="InterPro" id="IPR027417">
    <property type="entry name" value="P-loop_NTPase"/>
</dbReference>
<dbReference type="NCBIfam" id="TIGR01351">
    <property type="entry name" value="adk"/>
    <property type="match status" value="1"/>
</dbReference>
<dbReference type="NCBIfam" id="NF001381">
    <property type="entry name" value="PRK00279.1-3"/>
    <property type="match status" value="1"/>
</dbReference>
<dbReference type="NCBIfam" id="NF011100">
    <property type="entry name" value="PRK14527.1"/>
    <property type="match status" value="1"/>
</dbReference>
<dbReference type="NCBIfam" id="NF011101">
    <property type="entry name" value="PRK14528.1"/>
    <property type="match status" value="1"/>
</dbReference>
<dbReference type="NCBIfam" id="NF011104">
    <property type="entry name" value="PRK14531.1"/>
    <property type="match status" value="1"/>
</dbReference>
<dbReference type="NCBIfam" id="NF011105">
    <property type="entry name" value="PRK14532.1"/>
    <property type="match status" value="1"/>
</dbReference>
<dbReference type="PANTHER" id="PTHR23359">
    <property type="entry name" value="NUCLEOTIDE KINASE"/>
    <property type="match status" value="1"/>
</dbReference>
<dbReference type="Pfam" id="PF00406">
    <property type="entry name" value="ADK"/>
    <property type="match status" value="1"/>
</dbReference>
<dbReference type="PRINTS" id="PR00094">
    <property type="entry name" value="ADENYLTKNASE"/>
</dbReference>
<dbReference type="SUPFAM" id="SSF52540">
    <property type="entry name" value="P-loop containing nucleoside triphosphate hydrolases"/>
    <property type="match status" value="1"/>
</dbReference>
<dbReference type="PROSITE" id="PS00113">
    <property type="entry name" value="ADENYLATE_KINASE"/>
    <property type="match status" value="1"/>
</dbReference>
<proteinExistence type="inferred from homology"/>
<feature type="chain" id="PRO_1000058858" description="Adenylate kinase">
    <location>
        <begin position="1"/>
        <end position="181"/>
    </location>
</feature>
<feature type="region of interest" description="NMP" evidence="1">
    <location>
        <begin position="30"/>
        <end position="59"/>
    </location>
</feature>
<feature type="region of interest" description="LID" evidence="1">
    <location>
        <begin position="126"/>
        <end position="132"/>
    </location>
</feature>
<feature type="binding site" evidence="1">
    <location>
        <begin position="10"/>
        <end position="15"/>
    </location>
    <ligand>
        <name>ATP</name>
        <dbReference type="ChEBI" id="CHEBI:30616"/>
    </ligand>
</feature>
<feature type="binding site" evidence="1">
    <location>
        <position position="31"/>
    </location>
    <ligand>
        <name>AMP</name>
        <dbReference type="ChEBI" id="CHEBI:456215"/>
    </ligand>
</feature>
<feature type="binding site" evidence="1">
    <location>
        <position position="36"/>
    </location>
    <ligand>
        <name>AMP</name>
        <dbReference type="ChEBI" id="CHEBI:456215"/>
    </ligand>
</feature>
<feature type="binding site" evidence="1">
    <location>
        <begin position="57"/>
        <end position="59"/>
    </location>
    <ligand>
        <name>AMP</name>
        <dbReference type="ChEBI" id="CHEBI:456215"/>
    </ligand>
</feature>
<feature type="binding site" evidence="1">
    <location>
        <begin position="85"/>
        <end position="88"/>
    </location>
    <ligand>
        <name>AMP</name>
        <dbReference type="ChEBI" id="CHEBI:456215"/>
    </ligand>
</feature>
<feature type="binding site" evidence="1">
    <location>
        <position position="92"/>
    </location>
    <ligand>
        <name>AMP</name>
        <dbReference type="ChEBI" id="CHEBI:456215"/>
    </ligand>
</feature>
<feature type="binding site" evidence="1">
    <location>
        <position position="127"/>
    </location>
    <ligand>
        <name>ATP</name>
        <dbReference type="ChEBI" id="CHEBI:30616"/>
    </ligand>
</feature>
<feature type="binding site" evidence="1">
    <location>
        <position position="129"/>
    </location>
    <ligand>
        <name>AMP</name>
        <dbReference type="ChEBI" id="CHEBI:456215"/>
    </ligand>
</feature>
<feature type="binding site" evidence="1">
    <location>
        <position position="140"/>
    </location>
    <ligand>
        <name>AMP</name>
        <dbReference type="ChEBI" id="CHEBI:456215"/>
    </ligand>
</feature>
<feature type="binding site" evidence="1">
    <location>
        <position position="166"/>
    </location>
    <ligand>
        <name>ATP</name>
        <dbReference type="ChEBI" id="CHEBI:30616"/>
    </ligand>
</feature>
<gene>
    <name evidence="1" type="primary">adk</name>
    <name type="ordered locus">Mmcs_1047</name>
</gene>
<keyword id="KW-0067">ATP-binding</keyword>
<keyword id="KW-0963">Cytoplasm</keyword>
<keyword id="KW-0418">Kinase</keyword>
<keyword id="KW-0545">Nucleotide biosynthesis</keyword>
<keyword id="KW-0547">Nucleotide-binding</keyword>
<keyword id="KW-0808">Transferase</keyword>
<evidence type="ECO:0000255" key="1">
    <source>
        <dbReference type="HAMAP-Rule" id="MF_00235"/>
    </source>
</evidence>
<name>KAD_MYCSS</name>
<reference key="1">
    <citation type="submission" date="2006-06" db="EMBL/GenBank/DDBJ databases">
        <title>Complete sequence of chromosome of Mycobacterium sp. MCS.</title>
        <authorList>
            <consortium name="US DOE Joint Genome Institute"/>
            <person name="Copeland A."/>
            <person name="Lucas S."/>
            <person name="Lapidus A."/>
            <person name="Barry K."/>
            <person name="Detter J.C."/>
            <person name="Glavina del Rio T."/>
            <person name="Hammon N."/>
            <person name="Israni S."/>
            <person name="Dalin E."/>
            <person name="Tice H."/>
            <person name="Pitluck S."/>
            <person name="Martinez M."/>
            <person name="Schmutz J."/>
            <person name="Larimer F."/>
            <person name="Land M."/>
            <person name="Hauser L."/>
            <person name="Kyrpides N."/>
            <person name="Kim E."/>
            <person name="Miller C.D."/>
            <person name="Hughes J.E."/>
            <person name="Anderson A.J."/>
            <person name="Sims R.C."/>
            <person name="Richardson P."/>
        </authorList>
    </citation>
    <scope>NUCLEOTIDE SEQUENCE [LARGE SCALE GENOMIC DNA]</scope>
    <source>
        <strain>MCS</strain>
    </source>
</reference>
<accession>Q1BD73</accession>
<sequence>MRIVLLGPPGAGKGTQAAKLADKLGVPHISTGDLFRDNITNETELGVEAKRYLDAGDLVPSSLTNALVEDRIDQDDAKNGFILDGYPRSVEQAEALGDMLAARNLSLDAVIEFRVSEDELLSRLKGRGRADDTEEVILNRMKVYRDETAPLLDHYRAELKTVDAVGSLDEVFARALQALGR</sequence>
<organism>
    <name type="scientific">Mycobacterium sp. (strain MCS)</name>
    <dbReference type="NCBI Taxonomy" id="164756"/>
    <lineage>
        <taxon>Bacteria</taxon>
        <taxon>Bacillati</taxon>
        <taxon>Actinomycetota</taxon>
        <taxon>Actinomycetes</taxon>
        <taxon>Mycobacteriales</taxon>
        <taxon>Mycobacteriaceae</taxon>
        <taxon>Mycobacterium</taxon>
    </lineage>
</organism>
<protein>
    <recommendedName>
        <fullName evidence="1">Adenylate kinase</fullName>
        <shortName evidence="1">AK</shortName>
        <ecNumber evidence="1">2.7.4.3</ecNumber>
    </recommendedName>
    <alternativeName>
        <fullName evidence="1">ATP-AMP transphosphorylase</fullName>
    </alternativeName>
    <alternativeName>
        <fullName evidence="1">ATP:AMP phosphotransferase</fullName>
    </alternativeName>
    <alternativeName>
        <fullName evidence="1">Adenylate monophosphate kinase</fullName>
    </alternativeName>
</protein>
<comment type="function">
    <text evidence="1">Catalyzes the reversible transfer of the terminal phosphate group between ATP and AMP. Plays an important role in cellular energy homeostasis and in adenine nucleotide metabolism.</text>
</comment>
<comment type="catalytic activity">
    <reaction evidence="1">
        <text>AMP + ATP = 2 ADP</text>
        <dbReference type="Rhea" id="RHEA:12973"/>
        <dbReference type="ChEBI" id="CHEBI:30616"/>
        <dbReference type="ChEBI" id="CHEBI:456215"/>
        <dbReference type="ChEBI" id="CHEBI:456216"/>
        <dbReference type="EC" id="2.7.4.3"/>
    </reaction>
</comment>
<comment type="pathway">
    <text evidence="1">Purine metabolism; AMP biosynthesis via salvage pathway; AMP from ADP: step 1/1.</text>
</comment>
<comment type="subunit">
    <text evidence="1">Monomer.</text>
</comment>
<comment type="subcellular location">
    <subcellularLocation>
        <location evidence="1">Cytoplasm</location>
    </subcellularLocation>
</comment>
<comment type="domain">
    <text evidence="1">Consists of three domains, a large central CORE domain and two small peripheral domains, NMPbind and LID, which undergo movements during catalysis. The LID domain closes over the site of phosphoryl transfer upon ATP binding. Assembling and dissambling the active center during each catalytic cycle provides an effective means to prevent ATP hydrolysis.</text>
</comment>
<comment type="similarity">
    <text evidence="1">Belongs to the adenylate kinase family.</text>
</comment>